<name>AROD_STAAC</name>
<protein>
    <recommendedName>
        <fullName evidence="1">3-dehydroquinate dehydratase</fullName>
        <shortName evidence="1">3-dehydroquinase</shortName>
        <ecNumber evidence="1">4.2.1.10</ecNumber>
    </recommendedName>
    <alternativeName>
        <fullName evidence="1">Type I DHQase</fullName>
    </alternativeName>
    <alternativeName>
        <fullName evidence="1">Type I dehydroquinase</fullName>
        <shortName evidence="1">DHQ1</shortName>
    </alternativeName>
</protein>
<comment type="function">
    <text evidence="1">Involved in the third step of the chorismate pathway, which leads to the biosynthesis of aromatic amino acids. Catalyzes the cis-dehydration of 3-dehydroquinate (DHQ) and introduces the first double bond of the aromatic ring to yield 3-dehydroshikimate.</text>
</comment>
<comment type="catalytic activity">
    <reaction evidence="1">
        <text>3-dehydroquinate = 3-dehydroshikimate + H2O</text>
        <dbReference type="Rhea" id="RHEA:21096"/>
        <dbReference type="ChEBI" id="CHEBI:15377"/>
        <dbReference type="ChEBI" id="CHEBI:16630"/>
        <dbReference type="ChEBI" id="CHEBI:32364"/>
        <dbReference type="EC" id="4.2.1.10"/>
    </reaction>
</comment>
<comment type="pathway">
    <text evidence="1">Metabolic intermediate biosynthesis; chorismate biosynthesis; chorismate from D-erythrose 4-phosphate and phosphoenolpyruvate: step 3/7.</text>
</comment>
<comment type="subunit">
    <text evidence="1">Homodimer.</text>
</comment>
<comment type="similarity">
    <text evidence="1">Belongs to the type-I 3-dehydroquinase family.</text>
</comment>
<accession>Q5HHL2</accession>
<dbReference type="EC" id="4.2.1.10" evidence="1"/>
<dbReference type="EMBL" id="CP000046">
    <property type="protein sequence ID" value="AAW36427.1"/>
    <property type="molecule type" value="Genomic_DNA"/>
</dbReference>
<dbReference type="RefSeq" id="WP_000150017.1">
    <property type="nucleotide sequence ID" value="NZ_JBGOFO010000005.1"/>
</dbReference>
<dbReference type="SMR" id="Q5HHL2"/>
<dbReference type="KEGG" id="sac:SACOL0873"/>
<dbReference type="HOGENOM" id="CLU_064444_2_1_9"/>
<dbReference type="UniPathway" id="UPA00053">
    <property type="reaction ID" value="UER00086"/>
</dbReference>
<dbReference type="Proteomes" id="UP000000530">
    <property type="component" value="Chromosome"/>
</dbReference>
<dbReference type="GO" id="GO:0003855">
    <property type="term" value="F:3-dehydroquinate dehydratase activity"/>
    <property type="evidence" value="ECO:0007669"/>
    <property type="project" value="UniProtKB-UniRule"/>
</dbReference>
<dbReference type="GO" id="GO:0046279">
    <property type="term" value="P:3,4-dihydroxybenzoate biosynthetic process"/>
    <property type="evidence" value="ECO:0007669"/>
    <property type="project" value="UniProtKB-ARBA"/>
</dbReference>
<dbReference type="GO" id="GO:0008652">
    <property type="term" value="P:amino acid biosynthetic process"/>
    <property type="evidence" value="ECO:0007669"/>
    <property type="project" value="UniProtKB-KW"/>
</dbReference>
<dbReference type="GO" id="GO:0009073">
    <property type="term" value="P:aromatic amino acid family biosynthetic process"/>
    <property type="evidence" value="ECO:0007669"/>
    <property type="project" value="UniProtKB-KW"/>
</dbReference>
<dbReference type="GO" id="GO:0009423">
    <property type="term" value="P:chorismate biosynthetic process"/>
    <property type="evidence" value="ECO:0007669"/>
    <property type="project" value="UniProtKB-UniRule"/>
</dbReference>
<dbReference type="CDD" id="cd00502">
    <property type="entry name" value="DHQase_I"/>
    <property type="match status" value="1"/>
</dbReference>
<dbReference type="FunFam" id="3.20.20.70:FF:000216">
    <property type="entry name" value="3-dehydroquinate dehydratase"/>
    <property type="match status" value="1"/>
</dbReference>
<dbReference type="Gene3D" id="3.20.20.70">
    <property type="entry name" value="Aldolase class I"/>
    <property type="match status" value="1"/>
</dbReference>
<dbReference type="HAMAP" id="MF_00214">
    <property type="entry name" value="AroD"/>
    <property type="match status" value="1"/>
</dbReference>
<dbReference type="InterPro" id="IPR013785">
    <property type="entry name" value="Aldolase_TIM"/>
</dbReference>
<dbReference type="InterPro" id="IPR001381">
    <property type="entry name" value="DHquinase_I"/>
</dbReference>
<dbReference type="InterPro" id="IPR050146">
    <property type="entry name" value="Type-I_3-dehydroquinase"/>
</dbReference>
<dbReference type="NCBIfam" id="TIGR01093">
    <property type="entry name" value="aroD"/>
    <property type="match status" value="1"/>
</dbReference>
<dbReference type="PANTHER" id="PTHR43699">
    <property type="entry name" value="3-DEHYDROQUINATE DEHYDRATASE"/>
    <property type="match status" value="1"/>
</dbReference>
<dbReference type="PANTHER" id="PTHR43699:SF1">
    <property type="entry name" value="3-DEHYDROQUINATE DEHYDRATASE"/>
    <property type="match status" value="1"/>
</dbReference>
<dbReference type="Pfam" id="PF01487">
    <property type="entry name" value="DHquinase_I"/>
    <property type="match status" value="1"/>
</dbReference>
<dbReference type="SUPFAM" id="SSF51569">
    <property type="entry name" value="Aldolase"/>
    <property type="match status" value="1"/>
</dbReference>
<evidence type="ECO:0000255" key="1">
    <source>
        <dbReference type="HAMAP-Rule" id="MF_00214"/>
    </source>
</evidence>
<keyword id="KW-0028">Amino-acid biosynthesis</keyword>
<keyword id="KW-0057">Aromatic amino acid biosynthesis</keyword>
<keyword id="KW-0456">Lyase</keyword>
<keyword id="KW-0704">Schiff base</keyword>
<sequence length="238" mass="26869">MTHVEVVATIAPQLSIEETLIQKINHRIDAIDVLELRIDQIENVTVDQVAEMITKLKVMQDSFKLLVTYRTKLQGGYGQFTNDSYLNLISDLANINGIDMIDIEWQADIDIEKHQRIITHLQQYNKEVVISHHNFESTPPLDELQFIFFKMQKFNPEYVKLAVMPHNKNDVLNLLQAMSTFSDTMDCKVVGISMSKLGLISRTAQGVFGGALTYGCIGVPQAPGQIDVTDLKAQVTLY</sequence>
<gene>
    <name evidence="1" type="primary">aroD</name>
    <name type="ordered locus">SACOL0873</name>
</gene>
<feature type="chain" id="PRO_0000138808" description="3-dehydroquinate dehydratase">
    <location>
        <begin position="1"/>
        <end position="238"/>
    </location>
</feature>
<feature type="active site" description="Proton donor/acceptor" evidence="1">
    <location>
        <position position="133"/>
    </location>
</feature>
<feature type="active site" description="Schiff-base intermediate with substrate" evidence="1">
    <location>
        <position position="160"/>
    </location>
</feature>
<feature type="binding site" evidence="1">
    <location>
        <begin position="35"/>
        <end position="37"/>
    </location>
    <ligand>
        <name>3-dehydroquinate</name>
        <dbReference type="ChEBI" id="CHEBI:32364"/>
    </ligand>
</feature>
<feature type="binding site" evidence="1">
    <location>
        <position position="70"/>
    </location>
    <ligand>
        <name>3-dehydroquinate</name>
        <dbReference type="ChEBI" id="CHEBI:32364"/>
    </ligand>
</feature>
<feature type="binding site" evidence="1">
    <location>
        <position position="202"/>
    </location>
    <ligand>
        <name>3-dehydroquinate</name>
        <dbReference type="ChEBI" id="CHEBI:32364"/>
    </ligand>
</feature>
<feature type="binding site" evidence="1">
    <location>
        <position position="225"/>
    </location>
    <ligand>
        <name>3-dehydroquinate</name>
        <dbReference type="ChEBI" id="CHEBI:32364"/>
    </ligand>
</feature>
<reference key="1">
    <citation type="journal article" date="2005" name="J. Bacteriol.">
        <title>Insights on evolution of virulence and resistance from the complete genome analysis of an early methicillin-resistant Staphylococcus aureus strain and a biofilm-producing methicillin-resistant Staphylococcus epidermidis strain.</title>
        <authorList>
            <person name="Gill S.R."/>
            <person name="Fouts D.E."/>
            <person name="Archer G.L."/>
            <person name="Mongodin E.F."/>
            <person name="DeBoy R.T."/>
            <person name="Ravel J."/>
            <person name="Paulsen I.T."/>
            <person name="Kolonay J.F."/>
            <person name="Brinkac L.M."/>
            <person name="Beanan M.J."/>
            <person name="Dodson R.J."/>
            <person name="Daugherty S.C."/>
            <person name="Madupu R."/>
            <person name="Angiuoli S.V."/>
            <person name="Durkin A.S."/>
            <person name="Haft D.H."/>
            <person name="Vamathevan J.J."/>
            <person name="Khouri H."/>
            <person name="Utterback T.R."/>
            <person name="Lee C."/>
            <person name="Dimitrov G."/>
            <person name="Jiang L."/>
            <person name="Qin H."/>
            <person name="Weidman J."/>
            <person name="Tran K."/>
            <person name="Kang K.H."/>
            <person name="Hance I.R."/>
            <person name="Nelson K.E."/>
            <person name="Fraser C.M."/>
        </authorList>
    </citation>
    <scope>NUCLEOTIDE SEQUENCE [LARGE SCALE GENOMIC DNA]</scope>
    <source>
        <strain>COL</strain>
    </source>
</reference>
<organism>
    <name type="scientific">Staphylococcus aureus (strain COL)</name>
    <dbReference type="NCBI Taxonomy" id="93062"/>
    <lineage>
        <taxon>Bacteria</taxon>
        <taxon>Bacillati</taxon>
        <taxon>Bacillota</taxon>
        <taxon>Bacilli</taxon>
        <taxon>Bacillales</taxon>
        <taxon>Staphylococcaceae</taxon>
        <taxon>Staphylococcus</taxon>
    </lineage>
</organism>
<proteinExistence type="inferred from homology"/>